<proteinExistence type="inferred from homology"/>
<accession>P28400</accession>
<geneLocation type="chloroplast"/>
<gene>
    <name evidence="1" type="primary">rbcL</name>
</gene>
<sequence length="465" mass="51550">VGFKAGVKDYKLTYYTPDYETKDTDILAAFRVTPQPGVPPEEAGAAVAAESSTGTWTTVWTDGLTSLDRYKGRCYHIEPVPGEESQFIAYVAYPLDLFEEGSVTNMFTSIVGNVFGFKALRALRLEDLRIPPAYTKTFWGPPHGIQVERDKLNKYGRPLLGCTIKPKLGLSAKNYGRAVYECLRGGLDFTKDDENVNSQPFMRWRDRFLFCAEAIFKAQAETGEIKGHYLNATAGTCEEMMKRAVFARELGVPIIMHDYLTGGFTANTSLAHYCRDNGLLLHIHRAMHAVIDRQKNHGMHFRVLAKALRMSGGDHIHAGTVVGKLEGERDITLGFVDLLRDDFVEKDRSRGIFFTQDWVSLAGVLPVASGGIHVWHMPALTEIFGDDSVLQFGGGTLGHPWGNAPGAVANRVALEACVQARNEGRDLAREGNEIIEEASKWSPELAAACAIWKKIKFEFEPVDTI</sequence>
<name>RBL_DILIN</name>
<feature type="chain" id="PRO_0000062443" description="Ribulose bisphosphate carboxylase large chain">
    <location>
        <begin position="1" status="less than"/>
        <end position="465"/>
    </location>
</feature>
<feature type="active site" description="Proton acceptor" evidence="1">
    <location>
        <position position="165"/>
    </location>
</feature>
<feature type="active site" description="Proton acceptor" evidence="1">
    <location>
        <position position="284"/>
    </location>
</feature>
<feature type="binding site" description="in homodimeric partner" evidence="1">
    <location>
        <position position="113"/>
    </location>
    <ligand>
        <name>substrate</name>
    </ligand>
</feature>
<feature type="binding site" evidence="1">
    <location>
        <position position="163"/>
    </location>
    <ligand>
        <name>substrate</name>
    </ligand>
</feature>
<feature type="binding site" evidence="1">
    <location>
        <position position="167"/>
    </location>
    <ligand>
        <name>substrate</name>
    </ligand>
</feature>
<feature type="binding site" description="via carbamate group" evidence="1">
    <location>
        <position position="191"/>
    </location>
    <ligand>
        <name>Mg(2+)</name>
        <dbReference type="ChEBI" id="CHEBI:18420"/>
    </ligand>
</feature>
<feature type="binding site" evidence="1">
    <location>
        <position position="193"/>
    </location>
    <ligand>
        <name>Mg(2+)</name>
        <dbReference type="ChEBI" id="CHEBI:18420"/>
    </ligand>
</feature>
<feature type="binding site" evidence="1">
    <location>
        <position position="194"/>
    </location>
    <ligand>
        <name>Mg(2+)</name>
        <dbReference type="ChEBI" id="CHEBI:18420"/>
    </ligand>
</feature>
<feature type="binding site" evidence="1">
    <location>
        <position position="285"/>
    </location>
    <ligand>
        <name>substrate</name>
    </ligand>
</feature>
<feature type="binding site" evidence="1">
    <location>
        <position position="317"/>
    </location>
    <ligand>
        <name>substrate</name>
    </ligand>
</feature>
<feature type="binding site" evidence="1">
    <location>
        <position position="369"/>
    </location>
    <ligand>
        <name>substrate</name>
    </ligand>
</feature>
<feature type="site" description="Transition state stabilizer" evidence="1">
    <location>
        <position position="324"/>
    </location>
</feature>
<feature type="modified residue" description="N6,N6,N6-trimethyllysine" evidence="1">
    <location>
        <position position="4"/>
    </location>
</feature>
<feature type="modified residue" description="N6-carboxylysine" evidence="1">
    <location>
        <position position="191"/>
    </location>
</feature>
<feature type="disulfide bond" description="Interchain; in linked form" evidence="1">
    <location>
        <position position="237"/>
    </location>
</feature>
<feature type="non-terminal residue">
    <location>
        <position position="1"/>
    </location>
</feature>
<organism>
    <name type="scientific">Dillenia indica</name>
    <name type="common">Elephant apple</name>
    <name type="synonym">Dillenia speciosa</name>
    <dbReference type="NCBI Taxonomy" id="4378"/>
    <lineage>
        <taxon>Eukaryota</taxon>
        <taxon>Viridiplantae</taxon>
        <taxon>Streptophyta</taxon>
        <taxon>Embryophyta</taxon>
        <taxon>Tracheophyta</taxon>
        <taxon>Spermatophyta</taxon>
        <taxon>Magnoliopsida</taxon>
        <taxon>eudicotyledons</taxon>
        <taxon>Gunneridae</taxon>
        <taxon>Pentapetalae</taxon>
        <taxon>Dilleniales</taxon>
        <taxon>Dilleniaceae</taxon>
        <taxon>Dillenia</taxon>
    </lineage>
</organism>
<reference key="1">
    <citation type="journal article" date="1992" name="Science">
        <title>Carnivorous plants: phylogeny and structural evolution.</title>
        <authorList>
            <person name="Albert V.A."/>
            <person name="Williams S.E."/>
            <person name="Chase M.W."/>
        </authorList>
    </citation>
    <scope>NUCLEOTIDE SEQUENCE [GENOMIC DNA]</scope>
</reference>
<comment type="function">
    <text evidence="1">RuBisCO catalyzes two reactions: the carboxylation of D-ribulose 1,5-bisphosphate, the primary event in carbon dioxide fixation, as well as the oxidative fragmentation of the pentose substrate in the photorespiration process. Both reactions occur simultaneously and in competition at the same active site.</text>
</comment>
<comment type="catalytic activity">
    <reaction evidence="1">
        <text>2 (2R)-3-phosphoglycerate + 2 H(+) = D-ribulose 1,5-bisphosphate + CO2 + H2O</text>
        <dbReference type="Rhea" id="RHEA:23124"/>
        <dbReference type="ChEBI" id="CHEBI:15377"/>
        <dbReference type="ChEBI" id="CHEBI:15378"/>
        <dbReference type="ChEBI" id="CHEBI:16526"/>
        <dbReference type="ChEBI" id="CHEBI:57870"/>
        <dbReference type="ChEBI" id="CHEBI:58272"/>
        <dbReference type="EC" id="4.1.1.39"/>
    </reaction>
</comment>
<comment type="catalytic activity">
    <reaction evidence="1">
        <text>D-ribulose 1,5-bisphosphate + O2 = 2-phosphoglycolate + (2R)-3-phosphoglycerate + 2 H(+)</text>
        <dbReference type="Rhea" id="RHEA:36631"/>
        <dbReference type="ChEBI" id="CHEBI:15378"/>
        <dbReference type="ChEBI" id="CHEBI:15379"/>
        <dbReference type="ChEBI" id="CHEBI:57870"/>
        <dbReference type="ChEBI" id="CHEBI:58033"/>
        <dbReference type="ChEBI" id="CHEBI:58272"/>
    </reaction>
</comment>
<comment type="cofactor">
    <cofactor evidence="1">
        <name>Mg(2+)</name>
        <dbReference type="ChEBI" id="CHEBI:18420"/>
    </cofactor>
    <text evidence="1">Binds 1 Mg(2+) ion per subunit.</text>
</comment>
<comment type="subunit">
    <text evidence="1">Heterohexadecamer of 8 large chains and 8 small chains; disulfide-linked. The disulfide link is formed within the large subunit homodimers.</text>
</comment>
<comment type="subcellular location">
    <subcellularLocation>
        <location>Plastid</location>
        <location>Chloroplast</location>
    </subcellularLocation>
</comment>
<comment type="PTM">
    <text evidence="1">The disulfide bond which can form in the large chain dimeric partners within the hexadecamer appears to be associated with oxidative stress and protein turnover.</text>
</comment>
<comment type="miscellaneous">
    <text evidence="1">The basic functional RuBisCO is composed of a large chain homodimer in a 'head-to-tail' conformation. In form I RuBisCO this homodimer is arranged in a barrel-like tetramer with the small subunits forming a tetrameric 'cap' on each end of the 'barrel'.</text>
</comment>
<comment type="similarity">
    <text evidence="1">Belongs to the RuBisCO large chain family. Type I subfamily.</text>
</comment>
<protein>
    <recommendedName>
        <fullName evidence="1">Ribulose bisphosphate carboxylase large chain</fullName>
        <shortName evidence="1">RuBisCO large subunit</shortName>
        <ecNumber evidence="1">4.1.1.39</ecNumber>
    </recommendedName>
</protein>
<keyword id="KW-0113">Calvin cycle</keyword>
<keyword id="KW-0120">Carbon dioxide fixation</keyword>
<keyword id="KW-0150">Chloroplast</keyword>
<keyword id="KW-1015">Disulfide bond</keyword>
<keyword id="KW-0456">Lyase</keyword>
<keyword id="KW-0460">Magnesium</keyword>
<keyword id="KW-0479">Metal-binding</keyword>
<keyword id="KW-0488">Methylation</keyword>
<keyword id="KW-0503">Monooxygenase</keyword>
<keyword id="KW-0560">Oxidoreductase</keyword>
<keyword id="KW-0601">Photorespiration</keyword>
<keyword id="KW-0602">Photosynthesis</keyword>
<keyword id="KW-0934">Plastid</keyword>
<dbReference type="EC" id="4.1.1.39" evidence="1"/>
<dbReference type="EMBL" id="L01903">
    <property type="protein sequence ID" value="AAA84205.2"/>
    <property type="molecule type" value="Genomic_DNA"/>
</dbReference>
<dbReference type="SMR" id="P28400"/>
<dbReference type="GO" id="GO:0009507">
    <property type="term" value="C:chloroplast"/>
    <property type="evidence" value="ECO:0007669"/>
    <property type="project" value="UniProtKB-SubCell"/>
</dbReference>
<dbReference type="GO" id="GO:0000287">
    <property type="term" value="F:magnesium ion binding"/>
    <property type="evidence" value="ECO:0007669"/>
    <property type="project" value="InterPro"/>
</dbReference>
<dbReference type="GO" id="GO:0004497">
    <property type="term" value="F:monooxygenase activity"/>
    <property type="evidence" value="ECO:0007669"/>
    <property type="project" value="UniProtKB-KW"/>
</dbReference>
<dbReference type="GO" id="GO:0016984">
    <property type="term" value="F:ribulose-bisphosphate carboxylase activity"/>
    <property type="evidence" value="ECO:0007669"/>
    <property type="project" value="UniProtKB-EC"/>
</dbReference>
<dbReference type="GO" id="GO:0009853">
    <property type="term" value="P:photorespiration"/>
    <property type="evidence" value="ECO:0007669"/>
    <property type="project" value="UniProtKB-KW"/>
</dbReference>
<dbReference type="GO" id="GO:0019253">
    <property type="term" value="P:reductive pentose-phosphate cycle"/>
    <property type="evidence" value="ECO:0007669"/>
    <property type="project" value="UniProtKB-KW"/>
</dbReference>
<dbReference type="CDD" id="cd08212">
    <property type="entry name" value="RuBisCO_large_I"/>
    <property type="match status" value="1"/>
</dbReference>
<dbReference type="FunFam" id="3.20.20.110:FF:000001">
    <property type="entry name" value="Ribulose bisphosphate carboxylase large chain"/>
    <property type="match status" value="1"/>
</dbReference>
<dbReference type="FunFam" id="3.30.70.150:FF:000001">
    <property type="entry name" value="Ribulose bisphosphate carboxylase large chain"/>
    <property type="match status" value="1"/>
</dbReference>
<dbReference type="Gene3D" id="3.20.20.110">
    <property type="entry name" value="Ribulose bisphosphate carboxylase, large subunit, C-terminal domain"/>
    <property type="match status" value="1"/>
</dbReference>
<dbReference type="Gene3D" id="3.30.70.150">
    <property type="entry name" value="RuBisCO large subunit, N-terminal domain"/>
    <property type="match status" value="1"/>
</dbReference>
<dbReference type="HAMAP" id="MF_01338">
    <property type="entry name" value="RuBisCO_L_type1"/>
    <property type="match status" value="1"/>
</dbReference>
<dbReference type="InterPro" id="IPR033966">
    <property type="entry name" value="RuBisCO"/>
</dbReference>
<dbReference type="InterPro" id="IPR020878">
    <property type="entry name" value="RuBisCo_large_chain_AS"/>
</dbReference>
<dbReference type="InterPro" id="IPR000685">
    <property type="entry name" value="RuBisCO_lsu_C"/>
</dbReference>
<dbReference type="InterPro" id="IPR036376">
    <property type="entry name" value="RuBisCO_lsu_C_sf"/>
</dbReference>
<dbReference type="InterPro" id="IPR017443">
    <property type="entry name" value="RuBisCO_lsu_fd_N"/>
</dbReference>
<dbReference type="InterPro" id="IPR036422">
    <property type="entry name" value="RuBisCO_lsu_N_sf"/>
</dbReference>
<dbReference type="InterPro" id="IPR020888">
    <property type="entry name" value="RuBisCO_lsuI"/>
</dbReference>
<dbReference type="NCBIfam" id="NF003252">
    <property type="entry name" value="PRK04208.1"/>
    <property type="match status" value="1"/>
</dbReference>
<dbReference type="PANTHER" id="PTHR42704">
    <property type="entry name" value="RIBULOSE BISPHOSPHATE CARBOXYLASE"/>
    <property type="match status" value="1"/>
</dbReference>
<dbReference type="PANTHER" id="PTHR42704:SF16">
    <property type="entry name" value="RIBULOSE BISPHOSPHATE CARBOXYLASE LARGE CHAIN"/>
    <property type="match status" value="1"/>
</dbReference>
<dbReference type="Pfam" id="PF00016">
    <property type="entry name" value="RuBisCO_large"/>
    <property type="match status" value="1"/>
</dbReference>
<dbReference type="Pfam" id="PF02788">
    <property type="entry name" value="RuBisCO_large_N"/>
    <property type="match status" value="1"/>
</dbReference>
<dbReference type="SFLD" id="SFLDG01052">
    <property type="entry name" value="RuBisCO"/>
    <property type="match status" value="1"/>
</dbReference>
<dbReference type="SFLD" id="SFLDS00014">
    <property type="entry name" value="RuBisCO"/>
    <property type="match status" value="1"/>
</dbReference>
<dbReference type="SFLD" id="SFLDG00301">
    <property type="entry name" value="RuBisCO-like_proteins"/>
    <property type="match status" value="1"/>
</dbReference>
<dbReference type="SUPFAM" id="SSF51649">
    <property type="entry name" value="RuBisCo, C-terminal domain"/>
    <property type="match status" value="1"/>
</dbReference>
<dbReference type="SUPFAM" id="SSF54966">
    <property type="entry name" value="RuBisCO, large subunit, small (N-terminal) domain"/>
    <property type="match status" value="1"/>
</dbReference>
<dbReference type="PROSITE" id="PS00157">
    <property type="entry name" value="RUBISCO_LARGE"/>
    <property type="match status" value="1"/>
</dbReference>
<evidence type="ECO:0000255" key="1">
    <source>
        <dbReference type="HAMAP-Rule" id="MF_01338"/>
    </source>
</evidence>